<gene>
    <name type="ordered locus">slr1592</name>
</gene>
<feature type="chain" id="PRO_0000162746" description="Uncharacterized RNA pseudouridine synthase slr1592">
    <location>
        <begin position="1"/>
        <end position="291"/>
    </location>
</feature>
<comment type="catalytic activity">
    <reaction>
        <text>a uridine in RNA = a pseudouridine in RNA</text>
        <dbReference type="Rhea" id="RHEA:48348"/>
        <dbReference type="Rhea" id="RHEA-COMP:12068"/>
        <dbReference type="Rhea" id="RHEA-COMP:12069"/>
        <dbReference type="ChEBI" id="CHEBI:65314"/>
        <dbReference type="ChEBI" id="CHEBI:65315"/>
    </reaction>
</comment>
<comment type="similarity">
    <text evidence="1">Belongs to the pseudouridine synthase RluA family.</text>
</comment>
<protein>
    <recommendedName>
        <fullName>Uncharacterized RNA pseudouridine synthase slr1592</fullName>
        <ecNumber>5.4.99.-</ecNumber>
    </recommendedName>
    <alternativeName>
        <fullName>RNA pseudouridylate synthase</fullName>
    </alternativeName>
    <alternativeName>
        <fullName>RNA-uridine isomerase</fullName>
    </alternativeName>
</protein>
<name>Y1592_SYNY3</name>
<organism>
    <name type="scientific">Synechocystis sp. (strain ATCC 27184 / PCC 6803 / Kazusa)</name>
    <dbReference type="NCBI Taxonomy" id="1111708"/>
    <lineage>
        <taxon>Bacteria</taxon>
        <taxon>Bacillati</taxon>
        <taxon>Cyanobacteriota</taxon>
        <taxon>Cyanophyceae</taxon>
        <taxon>Synechococcales</taxon>
        <taxon>Merismopediaceae</taxon>
        <taxon>Synechocystis</taxon>
    </lineage>
</organism>
<sequence>MLDFYSQRYLHSERQAWQERIEQGQIEVDGKTVDPTYPLQAGQTLTYWRSPWVEPEVPLQLSVLHRDEDLWAIDKPSGLPVLPGGDFVYHTVLEQLKIQYPQESLFPLHRLGTGTSGLLLLGRSTLGRRELSRQFREHICRKIYRTVIGPCDLPEKFECHQAIGKIPYPQLGYIYAASSHGKPAQSYGRILARSPEKTWLEVEIRTGRPHQIRIHLASLGYPLLGDRLYGPGGVPINCRTARPSDGGYTLHSYQLGFLHLHTQQAIKLTAPLPPELITPEVKTIALETEKH</sequence>
<accession>P72970</accession>
<reference key="1">
    <citation type="journal article" date="1996" name="DNA Res.">
        <title>Sequence analysis of the genome of the unicellular cyanobacterium Synechocystis sp. strain PCC6803. II. Sequence determination of the entire genome and assignment of potential protein-coding regions.</title>
        <authorList>
            <person name="Kaneko T."/>
            <person name="Sato S."/>
            <person name="Kotani H."/>
            <person name="Tanaka A."/>
            <person name="Asamizu E."/>
            <person name="Nakamura Y."/>
            <person name="Miyajima N."/>
            <person name="Hirosawa M."/>
            <person name="Sugiura M."/>
            <person name="Sasamoto S."/>
            <person name="Kimura T."/>
            <person name="Hosouchi T."/>
            <person name="Matsuno A."/>
            <person name="Muraki A."/>
            <person name="Nakazaki N."/>
            <person name="Naruo K."/>
            <person name="Okumura S."/>
            <person name="Shimpo S."/>
            <person name="Takeuchi C."/>
            <person name="Wada T."/>
            <person name="Watanabe A."/>
            <person name="Yamada M."/>
            <person name="Yasuda M."/>
            <person name="Tabata S."/>
        </authorList>
    </citation>
    <scope>NUCLEOTIDE SEQUENCE [LARGE SCALE GENOMIC DNA]</scope>
    <source>
        <strain>ATCC 27184 / PCC 6803 / Kazusa</strain>
    </source>
</reference>
<keyword id="KW-0413">Isomerase</keyword>
<keyword id="KW-1185">Reference proteome</keyword>
<dbReference type="EC" id="5.4.99.-"/>
<dbReference type="EMBL" id="BA000022">
    <property type="protein sequence ID" value="BAA16988.1"/>
    <property type="molecule type" value="Genomic_DNA"/>
</dbReference>
<dbReference type="PIR" id="S74948">
    <property type="entry name" value="S74948"/>
</dbReference>
<dbReference type="SMR" id="P72970"/>
<dbReference type="IntAct" id="P72970">
    <property type="interactions" value="2"/>
</dbReference>
<dbReference type="STRING" id="1148.gene:10497849"/>
<dbReference type="PaxDb" id="1148-1652063"/>
<dbReference type="EnsemblBacteria" id="BAA16988">
    <property type="protein sequence ID" value="BAA16988"/>
    <property type="gene ID" value="BAA16988"/>
</dbReference>
<dbReference type="KEGG" id="syn:slr1592"/>
<dbReference type="eggNOG" id="COG0564">
    <property type="taxonomic scope" value="Bacteria"/>
</dbReference>
<dbReference type="InParanoid" id="P72970"/>
<dbReference type="PhylomeDB" id="P72970"/>
<dbReference type="Proteomes" id="UP000001425">
    <property type="component" value="Chromosome"/>
</dbReference>
<dbReference type="GO" id="GO:0009982">
    <property type="term" value="F:pseudouridine synthase activity"/>
    <property type="evidence" value="ECO:0000318"/>
    <property type="project" value="GO_Central"/>
</dbReference>
<dbReference type="GO" id="GO:0003723">
    <property type="term" value="F:RNA binding"/>
    <property type="evidence" value="ECO:0007669"/>
    <property type="project" value="InterPro"/>
</dbReference>
<dbReference type="GO" id="GO:0120159">
    <property type="term" value="F:rRNA pseudouridine synthase activity"/>
    <property type="evidence" value="ECO:0007669"/>
    <property type="project" value="UniProtKB-ARBA"/>
</dbReference>
<dbReference type="GO" id="GO:0000455">
    <property type="term" value="P:enzyme-directed rRNA pseudouridine synthesis"/>
    <property type="evidence" value="ECO:0000318"/>
    <property type="project" value="GO_Central"/>
</dbReference>
<dbReference type="CDD" id="cd02869">
    <property type="entry name" value="PseudoU_synth_RluA_like"/>
    <property type="match status" value="1"/>
</dbReference>
<dbReference type="CDD" id="cd00165">
    <property type="entry name" value="S4"/>
    <property type="match status" value="1"/>
</dbReference>
<dbReference type="Gene3D" id="3.30.2350.10">
    <property type="entry name" value="Pseudouridine synthase"/>
    <property type="match status" value="1"/>
</dbReference>
<dbReference type="Gene3D" id="3.10.290.10">
    <property type="entry name" value="RNA-binding S4 domain"/>
    <property type="match status" value="1"/>
</dbReference>
<dbReference type="InterPro" id="IPR020103">
    <property type="entry name" value="PsdUridine_synth_cat_dom_sf"/>
</dbReference>
<dbReference type="InterPro" id="IPR006224">
    <property type="entry name" value="PsdUridine_synth_RluA-like_CS"/>
</dbReference>
<dbReference type="InterPro" id="IPR006225">
    <property type="entry name" value="PsdUridine_synth_RluC/D"/>
</dbReference>
<dbReference type="InterPro" id="IPR006145">
    <property type="entry name" value="PsdUridine_synth_RsuA/RluA"/>
</dbReference>
<dbReference type="InterPro" id="IPR050188">
    <property type="entry name" value="RluA_PseudoU_synthase"/>
</dbReference>
<dbReference type="InterPro" id="IPR002942">
    <property type="entry name" value="S4_RNA-bd"/>
</dbReference>
<dbReference type="InterPro" id="IPR036986">
    <property type="entry name" value="S4_RNA-bd_sf"/>
</dbReference>
<dbReference type="NCBIfam" id="TIGR00005">
    <property type="entry name" value="rluA_subfam"/>
    <property type="match status" value="1"/>
</dbReference>
<dbReference type="PANTHER" id="PTHR21600">
    <property type="entry name" value="MITOCHONDRIAL RNA PSEUDOURIDINE SYNTHASE"/>
    <property type="match status" value="1"/>
</dbReference>
<dbReference type="PANTHER" id="PTHR21600:SF88">
    <property type="entry name" value="RNA PSEUDOURIDINE SYNTHASE 5"/>
    <property type="match status" value="1"/>
</dbReference>
<dbReference type="Pfam" id="PF00849">
    <property type="entry name" value="PseudoU_synth_2"/>
    <property type="match status" value="1"/>
</dbReference>
<dbReference type="SMART" id="SM00363">
    <property type="entry name" value="S4"/>
    <property type="match status" value="1"/>
</dbReference>
<dbReference type="SUPFAM" id="SSF55174">
    <property type="entry name" value="Alpha-L RNA-binding motif"/>
    <property type="match status" value="1"/>
</dbReference>
<dbReference type="SUPFAM" id="SSF55120">
    <property type="entry name" value="Pseudouridine synthase"/>
    <property type="match status" value="1"/>
</dbReference>
<dbReference type="PROSITE" id="PS01129">
    <property type="entry name" value="PSI_RLU"/>
    <property type="match status" value="1"/>
</dbReference>
<proteinExistence type="inferred from homology"/>
<evidence type="ECO:0000305" key="1"/>